<name>RSMA_MOOTA</name>
<protein>
    <recommendedName>
        <fullName evidence="1">Ribosomal RNA small subunit methyltransferase A</fullName>
        <ecNumber evidence="1">2.1.1.182</ecNumber>
    </recommendedName>
    <alternativeName>
        <fullName evidence="1">16S rRNA (adenine(1518)-N(6)/adenine(1519)-N(6))-dimethyltransferase</fullName>
    </alternativeName>
    <alternativeName>
        <fullName evidence="1">16S rRNA dimethyladenosine transferase</fullName>
    </alternativeName>
    <alternativeName>
        <fullName evidence="1">16S rRNA dimethylase</fullName>
    </alternativeName>
    <alternativeName>
        <fullName evidence="1">S-adenosylmethionine-6-N', N'-adenosyl(rRNA) dimethyltransferase</fullName>
    </alternativeName>
</protein>
<reference key="1">
    <citation type="journal article" date="2008" name="Environ. Microbiol.">
        <title>The complete genome sequence of Moorella thermoacetica (f. Clostridium thermoaceticum).</title>
        <authorList>
            <person name="Pierce E."/>
            <person name="Xie G."/>
            <person name="Barabote R.D."/>
            <person name="Saunders E."/>
            <person name="Han C.S."/>
            <person name="Detter J.C."/>
            <person name="Richardson P."/>
            <person name="Brettin T.S."/>
            <person name="Das A."/>
            <person name="Ljungdahl L.G."/>
            <person name="Ragsdale S.W."/>
        </authorList>
    </citation>
    <scope>NUCLEOTIDE SEQUENCE [LARGE SCALE GENOMIC DNA]</scope>
    <source>
        <strain>ATCC 39073 / JCM 9320</strain>
    </source>
</reference>
<keyword id="KW-0963">Cytoplasm</keyword>
<keyword id="KW-0489">Methyltransferase</keyword>
<keyword id="KW-0694">RNA-binding</keyword>
<keyword id="KW-0698">rRNA processing</keyword>
<keyword id="KW-0949">S-adenosyl-L-methionine</keyword>
<keyword id="KW-0808">Transferase</keyword>
<sequence length="288" mass="31575">MDSVATPGRTLALVREKGLVPRKSRGQNFLVDANIVRKIARAAEVGPGDTVVEIGPGLGALTQELAARAGLVIAIEIDRELFAALEETLAGRDNVRLVAGDALKVDFDRLVAGILGTGEGRLPTYKVVANLPYYITTPILMHLLTSRFRIAELVLMVQAEVGYRMLARPGGKDYGALSVVVQYYTEPAVVLKVPRTVFYPRPEVDSLVLKLTCRTRPVVQVEDEDFFFRVVRAAFNQRRKTILNALGSLGFEKSKIMEALAGAGIDPRRRGETLGMEEFASISRTLQH</sequence>
<gene>
    <name evidence="1" type="primary">rsmA</name>
    <name evidence="1" type="synonym">ksgA</name>
    <name type="ordered locus">Moth_0052</name>
</gene>
<evidence type="ECO:0000255" key="1">
    <source>
        <dbReference type="HAMAP-Rule" id="MF_00607"/>
    </source>
</evidence>
<dbReference type="EC" id="2.1.1.182" evidence="1"/>
<dbReference type="EMBL" id="CP000232">
    <property type="protein sequence ID" value="ABC18391.1"/>
    <property type="molecule type" value="Genomic_DNA"/>
</dbReference>
<dbReference type="RefSeq" id="YP_428934.1">
    <property type="nucleotide sequence ID" value="NC_007644.1"/>
</dbReference>
<dbReference type="SMR" id="Q2RME8"/>
<dbReference type="STRING" id="264732.Moth_0052"/>
<dbReference type="EnsemblBacteria" id="ABC18391">
    <property type="protein sequence ID" value="ABC18391"/>
    <property type="gene ID" value="Moth_0052"/>
</dbReference>
<dbReference type="KEGG" id="mta:Moth_0052"/>
<dbReference type="PATRIC" id="fig|264732.11.peg.55"/>
<dbReference type="eggNOG" id="COG0030">
    <property type="taxonomic scope" value="Bacteria"/>
</dbReference>
<dbReference type="HOGENOM" id="CLU_041220_0_0_9"/>
<dbReference type="OrthoDB" id="9814755at2"/>
<dbReference type="GO" id="GO:0005829">
    <property type="term" value="C:cytosol"/>
    <property type="evidence" value="ECO:0007669"/>
    <property type="project" value="TreeGrafter"/>
</dbReference>
<dbReference type="GO" id="GO:0052908">
    <property type="term" value="F:16S rRNA (adenine(1518)-N(6)/adenine(1519)-N(6))-dimethyltransferase activity"/>
    <property type="evidence" value="ECO:0007669"/>
    <property type="project" value="UniProtKB-EC"/>
</dbReference>
<dbReference type="GO" id="GO:0003723">
    <property type="term" value="F:RNA binding"/>
    <property type="evidence" value="ECO:0007669"/>
    <property type="project" value="UniProtKB-KW"/>
</dbReference>
<dbReference type="CDD" id="cd02440">
    <property type="entry name" value="AdoMet_MTases"/>
    <property type="match status" value="1"/>
</dbReference>
<dbReference type="FunFam" id="1.10.8.100:FF:000001">
    <property type="entry name" value="Ribosomal RNA small subunit methyltransferase A"/>
    <property type="match status" value="1"/>
</dbReference>
<dbReference type="FunFam" id="3.40.50.150:FF:000023">
    <property type="entry name" value="Ribosomal RNA small subunit methyltransferase A"/>
    <property type="match status" value="1"/>
</dbReference>
<dbReference type="Gene3D" id="1.10.8.100">
    <property type="entry name" value="Ribosomal RNA adenine dimethylase-like, domain 2"/>
    <property type="match status" value="1"/>
</dbReference>
<dbReference type="Gene3D" id="3.40.50.150">
    <property type="entry name" value="Vaccinia Virus protein VP39"/>
    <property type="match status" value="1"/>
</dbReference>
<dbReference type="HAMAP" id="MF_00607">
    <property type="entry name" value="16SrRNA_methyltr_A"/>
    <property type="match status" value="1"/>
</dbReference>
<dbReference type="InterPro" id="IPR001737">
    <property type="entry name" value="KsgA/Erm"/>
</dbReference>
<dbReference type="InterPro" id="IPR023165">
    <property type="entry name" value="rRNA_Ade_diMease-like_C"/>
</dbReference>
<dbReference type="InterPro" id="IPR020596">
    <property type="entry name" value="rRNA_Ade_Mease_Trfase_CS"/>
</dbReference>
<dbReference type="InterPro" id="IPR020598">
    <property type="entry name" value="rRNA_Ade_methylase_Trfase_N"/>
</dbReference>
<dbReference type="InterPro" id="IPR011530">
    <property type="entry name" value="rRNA_adenine_dimethylase"/>
</dbReference>
<dbReference type="InterPro" id="IPR029063">
    <property type="entry name" value="SAM-dependent_MTases_sf"/>
</dbReference>
<dbReference type="NCBIfam" id="TIGR00755">
    <property type="entry name" value="ksgA"/>
    <property type="match status" value="1"/>
</dbReference>
<dbReference type="PANTHER" id="PTHR11727">
    <property type="entry name" value="DIMETHYLADENOSINE TRANSFERASE"/>
    <property type="match status" value="1"/>
</dbReference>
<dbReference type="PANTHER" id="PTHR11727:SF7">
    <property type="entry name" value="DIMETHYLADENOSINE TRANSFERASE-RELATED"/>
    <property type="match status" value="1"/>
</dbReference>
<dbReference type="Pfam" id="PF00398">
    <property type="entry name" value="RrnaAD"/>
    <property type="match status" value="1"/>
</dbReference>
<dbReference type="SMART" id="SM00650">
    <property type="entry name" value="rADc"/>
    <property type="match status" value="1"/>
</dbReference>
<dbReference type="SUPFAM" id="SSF53335">
    <property type="entry name" value="S-adenosyl-L-methionine-dependent methyltransferases"/>
    <property type="match status" value="1"/>
</dbReference>
<dbReference type="PROSITE" id="PS01131">
    <property type="entry name" value="RRNA_A_DIMETH"/>
    <property type="match status" value="1"/>
</dbReference>
<dbReference type="PROSITE" id="PS51689">
    <property type="entry name" value="SAM_RNA_A_N6_MT"/>
    <property type="match status" value="1"/>
</dbReference>
<accession>Q2RME8</accession>
<proteinExistence type="inferred from homology"/>
<feature type="chain" id="PRO_0000257304" description="Ribosomal RNA small subunit methyltransferase A">
    <location>
        <begin position="1"/>
        <end position="288"/>
    </location>
</feature>
<feature type="binding site" evidence="1">
    <location>
        <position position="28"/>
    </location>
    <ligand>
        <name>S-adenosyl-L-methionine</name>
        <dbReference type="ChEBI" id="CHEBI:59789"/>
    </ligand>
</feature>
<feature type="binding site" evidence="1">
    <location>
        <position position="30"/>
    </location>
    <ligand>
        <name>S-adenosyl-L-methionine</name>
        <dbReference type="ChEBI" id="CHEBI:59789"/>
    </ligand>
</feature>
<feature type="binding site" evidence="1">
    <location>
        <position position="55"/>
    </location>
    <ligand>
        <name>S-adenosyl-L-methionine</name>
        <dbReference type="ChEBI" id="CHEBI:59789"/>
    </ligand>
</feature>
<feature type="binding site" evidence="1">
    <location>
        <position position="76"/>
    </location>
    <ligand>
        <name>S-adenosyl-L-methionine</name>
        <dbReference type="ChEBI" id="CHEBI:59789"/>
    </ligand>
</feature>
<feature type="binding site" evidence="1">
    <location>
        <position position="101"/>
    </location>
    <ligand>
        <name>S-adenosyl-L-methionine</name>
        <dbReference type="ChEBI" id="CHEBI:59789"/>
    </ligand>
</feature>
<feature type="binding site" evidence="1">
    <location>
        <position position="130"/>
    </location>
    <ligand>
        <name>S-adenosyl-L-methionine</name>
        <dbReference type="ChEBI" id="CHEBI:59789"/>
    </ligand>
</feature>
<comment type="function">
    <text evidence="1">Specifically dimethylates two adjacent adenosines (A1518 and A1519) in the loop of a conserved hairpin near the 3'-end of 16S rRNA in the 30S particle. May play a critical role in biogenesis of 30S subunits.</text>
</comment>
<comment type="catalytic activity">
    <reaction evidence="1">
        <text>adenosine(1518)/adenosine(1519) in 16S rRNA + 4 S-adenosyl-L-methionine = N(6)-dimethyladenosine(1518)/N(6)-dimethyladenosine(1519) in 16S rRNA + 4 S-adenosyl-L-homocysteine + 4 H(+)</text>
        <dbReference type="Rhea" id="RHEA:19609"/>
        <dbReference type="Rhea" id="RHEA-COMP:10232"/>
        <dbReference type="Rhea" id="RHEA-COMP:10233"/>
        <dbReference type="ChEBI" id="CHEBI:15378"/>
        <dbReference type="ChEBI" id="CHEBI:57856"/>
        <dbReference type="ChEBI" id="CHEBI:59789"/>
        <dbReference type="ChEBI" id="CHEBI:74411"/>
        <dbReference type="ChEBI" id="CHEBI:74493"/>
        <dbReference type="EC" id="2.1.1.182"/>
    </reaction>
</comment>
<comment type="subcellular location">
    <subcellularLocation>
        <location evidence="1">Cytoplasm</location>
    </subcellularLocation>
</comment>
<comment type="similarity">
    <text evidence="1">Belongs to the class I-like SAM-binding methyltransferase superfamily. rRNA adenine N(6)-methyltransferase family. RsmA subfamily.</text>
</comment>
<organism>
    <name type="scientific">Moorella thermoacetica (strain ATCC 39073 / JCM 9320)</name>
    <dbReference type="NCBI Taxonomy" id="264732"/>
    <lineage>
        <taxon>Bacteria</taxon>
        <taxon>Bacillati</taxon>
        <taxon>Bacillota</taxon>
        <taxon>Clostridia</taxon>
        <taxon>Moorellales</taxon>
        <taxon>Moorellaceae</taxon>
        <taxon>Moorella</taxon>
    </lineage>
</organism>